<gene>
    <name type="ordered locus">At1g53330</name>
    <name type="ORF">F12M16.23</name>
</gene>
<evidence type="ECO:0000269" key="1">
    <source>
    </source>
</evidence>
<evidence type="ECO:0000305" key="2"/>
<name>PPR79_ARATH</name>
<dbReference type="EMBL" id="AC008007">
    <property type="protein sequence ID" value="AAF69537.1"/>
    <property type="molecule type" value="Genomic_DNA"/>
</dbReference>
<dbReference type="EMBL" id="CP002684">
    <property type="protein sequence ID" value="AEE32926.1"/>
    <property type="molecule type" value="Genomic_DNA"/>
</dbReference>
<dbReference type="PIR" id="E96573">
    <property type="entry name" value="E96573"/>
</dbReference>
<dbReference type="RefSeq" id="NP_175740.1">
    <property type="nucleotide sequence ID" value="NM_104212.2"/>
</dbReference>
<dbReference type="SMR" id="Q9MAG8"/>
<dbReference type="PaxDb" id="3702-AT1G53330.1"/>
<dbReference type="EnsemblPlants" id="AT1G53330.1">
    <property type="protein sequence ID" value="AT1G53330.1"/>
    <property type="gene ID" value="AT1G53330"/>
</dbReference>
<dbReference type="GeneID" id="841768"/>
<dbReference type="Gramene" id="AT1G53330.1">
    <property type="protein sequence ID" value="AT1G53330.1"/>
    <property type="gene ID" value="AT1G53330"/>
</dbReference>
<dbReference type="KEGG" id="ath:AT1G53330"/>
<dbReference type="Araport" id="AT1G53330"/>
<dbReference type="TAIR" id="AT1G53330"/>
<dbReference type="eggNOG" id="KOG4197">
    <property type="taxonomic scope" value="Eukaryota"/>
</dbReference>
<dbReference type="HOGENOM" id="CLU_002706_49_0_1"/>
<dbReference type="InParanoid" id="Q9MAG8"/>
<dbReference type="OMA" id="GRSKMFD"/>
<dbReference type="PhylomeDB" id="Q9MAG8"/>
<dbReference type="PRO" id="PR:Q9MAG8"/>
<dbReference type="Proteomes" id="UP000006548">
    <property type="component" value="Chromosome 1"/>
</dbReference>
<dbReference type="ExpressionAtlas" id="Q9MAG8">
    <property type="expression patterns" value="baseline and differential"/>
</dbReference>
<dbReference type="GO" id="GO:0009793">
    <property type="term" value="P:embryo development ending in seed dormancy"/>
    <property type="evidence" value="ECO:0000315"/>
    <property type="project" value="TAIR"/>
</dbReference>
<dbReference type="GO" id="GO:0010154">
    <property type="term" value="P:fruit development"/>
    <property type="evidence" value="ECO:0000315"/>
    <property type="project" value="TAIR"/>
</dbReference>
<dbReference type="GO" id="GO:0048364">
    <property type="term" value="P:root development"/>
    <property type="evidence" value="ECO:0000315"/>
    <property type="project" value="TAIR"/>
</dbReference>
<dbReference type="GO" id="GO:0048367">
    <property type="term" value="P:shoot system development"/>
    <property type="evidence" value="ECO:0000315"/>
    <property type="project" value="TAIR"/>
</dbReference>
<dbReference type="FunFam" id="1.25.40.10:FF:002303">
    <property type="entry name" value="Pentatricopeptide repeat (PPR) superfamily protein"/>
    <property type="match status" value="1"/>
</dbReference>
<dbReference type="FunFam" id="1.25.40.10:FF:001833">
    <property type="entry name" value="Pentatricopeptide repeat-containing protein At3g13160, mitochondrial"/>
    <property type="match status" value="1"/>
</dbReference>
<dbReference type="Gene3D" id="1.25.40.10">
    <property type="entry name" value="Tetratricopeptide repeat domain"/>
    <property type="match status" value="3"/>
</dbReference>
<dbReference type="InterPro" id="IPR002885">
    <property type="entry name" value="Pentatricopeptide_rpt"/>
</dbReference>
<dbReference type="InterPro" id="IPR050872">
    <property type="entry name" value="PPR_P_subfamily"/>
</dbReference>
<dbReference type="InterPro" id="IPR011990">
    <property type="entry name" value="TPR-like_helical_dom_sf"/>
</dbReference>
<dbReference type="NCBIfam" id="TIGR00756">
    <property type="entry name" value="PPR"/>
    <property type="match status" value="6"/>
</dbReference>
<dbReference type="PANTHER" id="PTHR46128">
    <property type="entry name" value="MITOCHONDRIAL GROUP I INTRON SPLICING FACTOR CCM1"/>
    <property type="match status" value="1"/>
</dbReference>
<dbReference type="PANTHER" id="PTHR46128:SF211">
    <property type="entry name" value="PENTACOTRIPEPTIDE-REPEAT REGION OF PRORP DOMAIN-CONTAINING PROTEIN"/>
    <property type="match status" value="1"/>
</dbReference>
<dbReference type="Pfam" id="PF01535">
    <property type="entry name" value="PPR"/>
    <property type="match status" value="2"/>
</dbReference>
<dbReference type="Pfam" id="PF13041">
    <property type="entry name" value="PPR_2"/>
    <property type="match status" value="3"/>
</dbReference>
<dbReference type="PROSITE" id="PS51375">
    <property type="entry name" value="PPR"/>
    <property type="match status" value="11"/>
</dbReference>
<comment type="function">
    <text evidence="1">Involved during embryo development.</text>
</comment>
<comment type="similarity">
    <text evidence="2">Belongs to the PPR family. P subfamily.</text>
</comment>
<comment type="online information" name="Pentatricopeptide repeat proteins">
    <link uri="https://ppr.plantenergy.uwa.edu.au"/>
</comment>
<accession>Q9MAG8</accession>
<organism>
    <name type="scientific">Arabidopsis thaliana</name>
    <name type="common">Mouse-ear cress</name>
    <dbReference type="NCBI Taxonomy" id="3702"/>
    <lineage>
        <taxon>Eukaryota</taxon>
        <taxon>Viridiplantae</taxon>
        <taxon>Streptophyta</taxon>
        <taxon>Embryophyta</taxon>
        <taxon>Tracheophyta</taxon>
        <taxon>Spermatophyta</taxon>
        <taxon>Magnoliopsida</taxon>
        <taxon>eudicotyledons</taxon>
        <taxon>Gunneridae</taxon>
        <taxon>Pentapetalae</taxon>
        <taxon>rosids</taxon>
        <taxon>malvids</taxon>
        <taxon>Brassicales</taxon>
        <taxon>Brassicaceae</taxon>
        <taxon>Camelineae</taxon>
        <taxon>Arabidopsis</taxon>
    </lineage>
</organism>
<proteinExistence type="inferred from homology"/>
<feature type="chain" id="PRO_0000342820" description="Putative pentatricopeptide repeat-containing protein At1g53330">
    <location>
        <begin position="1"/>
        <end position="471"/>
    </location>
</feature>
<feature type="repeat" description="PPR 1">
    <location>
        <begin position="46"/>
        <end position="81"/>
    </location>
</feature>
<feature type="repeat" description="PPR 2">
    <location>
        <begin position="82"/>
        <end position="116"/>
    </location>
</feature>
<feature type="repeat" description="PPR 3">
    <location>
        <begin position="117"/>
        <end position="147"/>
    </location>
</feature>
<feature type="repeat" description="PPR 4">
    <location>
        <begin position="151"/>
        <end position="185"/>
    </location>
</feature>
<feature type="repeat" description="PPR 5">
    <location>
        <begin position="186"/>
        <end position="221"/>
    </location>
</feature>
<feature type="repeat" description="PPR 6">
    <location>
        <begin position="222"/>
        <end position="256"/>
    </location>
</feature>
<feature type="repeat" description="PPR 7">
    <location>
        <begin position="257"/>
        <end position="291"/>
    </location>
</feature>
<feature type="repeat" description="PPR 8">
    <location>
        <begin position="292"/>
        <end position="326"/>
    </location>
</feature>
<feature type="repeat" description="PPR 9">
    <location>
        <begin position="327"/>
        <end position="361"/>
    </location>
</feature>
<feature type="repeat" description="PPR 10">
    <location>
        <begin position="362"/>
        <end position="396"/>
    </location>
</feature>
<reference key="1">
    <citation type="journal article" date="2000" name="Nature">
        <title>Sequence and analysis of chromosome 1 of the plant Arabidopsis thaliana.</title>
        <authorList>
            <person name="Theologis A."/>
            <person name="Ecker J.R."/>
            <person name="Palm C.J."/>
            <person name="Federspiel N.A."/>
            <person name="Kaul S."/>
            <person name="White O."/>
            <person name="Alonso J."/>
            <person name="Altafi H."/>
            <person name="Araujo R."/>
            <person name="Bowman C.L."/>
            <person name="Brooks S.Y."/>
            <person name="Buehler E."/>
            <person name="Chan A."/>
            <person name="Chao Q."/>
            <person name="Chen H."/>
            <person name="Cheuk R.F."/>
            <person name="Chin C.W."/>
            <person name="Chung M.K."/>
            <person name="Conn L."/>
            <person name="Conway A.B."/>
            <person name="Conway A.R."/>
            <person name="Creasy T.H."/>
            <person name="Dewar K."/>
            <person name="Dunn P."/>
            <person name="Etgu P."/>
            <person name="Feldblyum T.V."/>
            <person name="Feng J.-D."/>
            <person name="Fong B."/>
            <person name="Fujii C.Y."/>
            <person name="Gill J.E."/>
            <person name="Goldsmith A.D."/>
            <person name="Haas B."/>
            <person name="Hansen N.F."/>
            <person name="Hughes B."/>
            <person name="Huizar L."/>
            <person name="Hunter J.L."/>
            <person name="Jenkins J."/>
            <person name="Johnson-Hopson C."/>
            <person name="Khan S."/>
            <person name="Khaykin E."/>
            <person name="Kim C.J."/>
            <person name="Koo H.L."/>
            <person name="Kremenetskaia I."/>
            <person name="Kurtz D.B."/>
            <person name="Kwan A."/>
            <person name="Lam B."/>
            <person name="Langin-Hooper S."/>
            <person name="Lee A."/>
            <person name="Lee J.M."/>
            <person name="Lenz C.A."/>
            <person name="Li J.H."/>
            <person name="Li Y.-P."/>
            <person name="Lin X."/>
            <person name="Liu S.X."/>
            <person name="Liu Z.A."/>
            <person name="Luros J.S."/>
            <person name="Maiti R."/>
            <person name="Marziali A."/>
            <person name="Militscher J."/>
            <person name="Miranda M."/>
            <person name="Nguyen M."/>
            <person name="Nierman W.C."/>
            <person name="Osborne B.I."/>
            <person name="Pai G."/>
            <person name="Peterson J."/>
            <person name="Pham P.K."/>
            <person name="Rizzo M."/>
            <person name="Rooney T."/>
            <person name="Rowley D."/>
            <person name="Sakano H."/>
            <person name="Salzberg S.L."/>
            <person name="Schwartz J.R."/>
            <person name="Shinn P."/>
            <person name="Southwick A.M."/>
            <person name="Sun H."/>
            <person name="Tallon L.J."/>
            <person name="Tambunga G."/>
            <person name="Toriumi M.J."/>
            <person name="Town C.D."/>
            <person name="Utterback T."/>
            <person name="Van Aken S."/>
            <person name="Vaysberg M."/>
            <person name="Vysotskaia V.S."/>
            <person name="Walker M."/>
            <person name="Wu D."/>
            <person name="Yu G."/>
            <person name="Fraser C.M."/>
            <person name="Venter J.C."/>
            <person name="Davis R.W."/>
        </authorList>
    </citation>
    <scope>NUCLEOTIDE SEQUENCE [LARGE SCALE GENOMIC DNA]</scope>
    <source>
        <strain>cv. Columbia</strain>
    </source>
</reference>
<reference key="2">
    <citation type="journal article" date="2017" name="Plant J.">
        <title>Araport11: a complete reannotation of the Arabidopsis thaliana reference genome.</title>
        <authorList>
            <person name="Cheng C.Y."/>
            <person name="Krishnakumar V."/>
            <person name="Chan A.P."/>
            <person name="Thibaud-Nissen F."/>
            <person name="Schobel S."/>
            <person name="Town C.D."/>
        </authorList>
    </citation>
    <scope>GENOME REANNOTATION</scope>
    <source>
        <strain>cv. Columbia</strain>
    </source>
</reference>
<reference key="3">
    <citation type="journal article" date="2004" name="Plant Cell">
        <title>Genome-wide analysis of Arabidopsis pentatricopeptide repeat proteins reveals their essential role in organelle biogenesis.</title>
        <authorList>
            <person name="Lurin C."/>
            <person name="Andres C."/>
            <person name="Aubourg S."/>
            <person name="Bellaoui M."/>
            <person name="Bitton F."/>
            <person name="Bruyere C."/>
            <person name="Caboche M."/>
            <person name="Debast C."/>
            <person name="Gualberto J."/>
            <person name="Hoffmann B."/>
            <person name="Lecharny A."/>
            <person name="Le Ret M."/>
            <person name="Martin-Magniette M.-L."/>
            <person name="Mireau H."/>
            <person name="Peeters N."/>
            <person name="Renou J.-P."/>
            <person name="Szurek B."/>
            <person name="Taconnat L."/>
            <person name="Small I."/>
        </authorList>
    </citation>
    <scope>GENE FAMILY</scope>
</reference>
<reference key="4">
    <citation type="journal article" date="2006" name="Genetica">
        <title>Isolation and characterization of a novel semi-lethal Arabidopsis thaliana mutant of gene for pentatricopeptide (PPR) repeat-containing protein.</title>
        <authorList>
            <person name="Kocabek T."/>
            <person name="Repkova J."/>
            <person name="Dudova M."/>
            <person name="Hoyerova K."/>
            <person name="Vrba L."/>
        </authorList>
    </citation>
    <scope>FUNCTION</scope>
</reference>
<protein>
    <recommendedName>
        <fullName>Putative pentatricopeptide repeat-containing protein At1g53330</fullName>
    </recommendedName>
</protein>
<sequence length="471" mass="53074">MSAVKSVSSFRLASLLRRENDPSAAMKLFRNPDPESTNPKRPFRYSLLCYDIIITKLGGSKMFDELDQVLLHLKTDTRIVPTEIIFCNVINFFGRGKLPSRALHMFDEMPQYRCQRTVKSLNSLLSALLKCGELEKMKERLSSIDEFGKPDACTYNILIHGCSQSGCFDDALKLFDEMVKKKVKPTGVTFGTLIHGLCKDSRVKEALKMKHDMLKVYGVRPTVHIYASLIKALCQIGELSFAFKLKDEAYEGKIKVDAAIYSTLISSLIKAGRSNEVSMILEEMSEKGCKPDTVTYNVLINGFCVENDSESANRVLDEMVEKGLKPDVISYNMILGVFFRIKKWEEATYLFEDMPRRGCSPDTLSYRIVFDGLCEGLQFEEAAVILDEMLFKGYKPRRDRLEGFLQKLCESGKLEILSKVISSLHRGIAGDADVWSVMIPTMCKEPVISDSIDLLLNTVKEDGPLSAMPQC</sequence>
<keyword id="KW-1185">Reference proteome</keyword>
<keyword id="KW-0677">Repeat</keyword>